<proteinExistence type="inferred from homology"/>
<comment type="function">
    <text evidence="1">Responsible for the low-affinity transport of potassium into the cell. Likely operates as a K(+):H(+) symporter.</text>
</comment>
<comment type="catalytic activity">
    <reaction evidence="1">
        <text>K(+)(in) + H(+)(in) = K(+)(out) + H(+)(out)</text>
        <dbReference type="Rhea" id="RHEA:28490"/>
        <dbReference type="ChEBI" id="CHEBI:15378"/>
        <dbReference type="ChEBI" id="CHEBI:29103"/>
    </reaction>
    <physiologicalReaction direction="right-to-left" evidence="1">
        <dbReference type="Rhea" id="RHEA:28492"/>
    </physiologicalReaction>
</comment>
<comment type="subcellular location">
    <subcellularLocation>
        <location evidence="1">Cell inner membrane</location>
        <topology evidence="1">Multi-pass membrane protein</topology>
    </subcellularLocation>
</comment>
<comment type="similarity">
    <text evidence="1">Belongs to the HAK/KUP transporter (TC 2.A.72) family.</text>
</comment>
<reference key="1">
    <citation type="journal article" date="2009" name="PLoS Genet.">
        <title>Organised genome dynamics in the Escherichia coli species results in highly diverse adaptive paths.</title>
        <authorList>
            <person name="Touchon M."/>
            <person name="Hoede C."/>
            <person name="Tenaillon O."/>
            <person name="Barbe V."/>
            <person name="Baeriswyl S."/>
            <person name="Bidet P."/>
            <person name="Bingen E."/>
            <person name="Bonacorsi S."/>
            <person name="Bouchier C."/>
            <person name="Bouvet O."/>
            <person name="Calteau A."/>
            <person name="Chiapello H."/>
            <person name="Clermont O."/>
            <person name="Cruveiller S."/>
            <person name="Danchin A."/>
            <person name="Diard M."/>
            <person name="Dossat C."/>
            <person name="Karoui M.E."/>
            <person name="Frapy E."/>
            <person name="Garry L."/>
            <person name="Ghigo J.M."/>
            <person name="Gilles A.M."/>
            <person name="Johnson J."/>
            <person name="Le Bouguenec C."/>
            <person name="Lescat M."/>
            <person name="Mangenot S."/>
            <person name="Martinez-Jehanne V."/>
            <person name="Matic I."/>
            <person name="Nassif X."/>
            <person name="Oztas S."/>
            <person name="Petit M.A."/>
            <person name="Pichon C."/>
            <person name="Rouy Z."/>
            <person name="Ruf C.S."/>
            <person name="Schneider D."/>
            <person name="Tourret J."/>
            <person name="Vacherie B."/>
            <person name="Vallenet D."/>
            <person name="Medigue C."/>
            <person name="Rocha E.P.C."/>
            <person name="Denamur E."/>
        </authorList>
    </citation>
    <scope>NUCLEOTIDE SEQUENCE [LARGE SCALE GENOMIC DNA]</scope>
    <source>
        <strain>IAI1</strain>
    </source>
</reference>
<evidence type="ECO:0000255" key="1">
    <source>
        <dbReference type="HAMAP-Rule" id="MF_01522"/>
    </source>
</evidence>
<organism>
    <name type="scientific">Escherichia coli O8 (strain IAI1)</name>
    <dbReference type="NCBI Taxonomy" id="585034"/>
    <lineage>
        <taxon>Bacteria</taxon>
        <taxon>Pseudomonadati</taxon>
        <taxon>Pseudomonadota</taxon>
        <taxon>Gammaproteobacteria</taxon>
        <taxon>Enterobacterales</taxon>
        <taxon>Enterobacteriaceae</taxon>
        <taxon>Escherichia</taxon>
    </lineage>
</organism>
<protein>
    <recommendedName>
        <fullName evidence="1">Low affinity potassium transport system protein Kup</fullName>
    </recommendedName>
    <alternativeName>
        <fullName evidence="1">Kup system potassium uptake protein</fullName>
    </alternativeName>
</protein>
<gene>
    <name evidence="1" type="primary">kup</name>
    <name type="ordered locus">ECIAI1_3931</name>
</gene>
<accession>B7M5A3</accession>
<keyword id="KW-0997">Cell inner membrane</keyword>
<keyword id="KW-1003">Cell membrane</keyword>
<keyword id="KW-0406">Ion transport</keyword>
<keyword id="KW-0472">Membrane</keyword>
<keyword id="KW-0630">Potassium</keyword>
<keyword id="KW-0633">Potassium transport</keyword>
<keyword id="KW-0769">Symport</keyword>
<keyword id="KW-0812">Transmembrane</keyword>
<keyword id="KW-1133">Transmembrane helix</keyword>
<keyword id="KW-0813">Transport</keyword>
<name>KUP_ECO8A</name>
<feature type="chain" id="PRO_1000190269" description="Low affinity potassium transport system protein Kup">
    <location>
        <begin position="1"/>
        <end position="622"/>
    </location>
</feature>
<feature type="transmembrane region" description="Helical" evidence="1">
    <location>
        <begin position="9"/>
        <end position="29"/>
    </location>
</feature>
<feature type="transmembrane region" description="Helical" evidence="1">
    <location>
        <begin position="49"/>
        <end position="69"/>
    </location>
</feature>
<feature type="transmembrane region" description="Helical" evidence="1">
    <location>
        <begin position="103"/>
        <end position="123"/>
    </location>
</feature>
<feature type="transmembrane region" description="Helical" evidence="1">
    <location>
        <begin position="137"/>
        <end position="157"/>
    </location>
</feature>
<feature type="transmembrane region" description="Helical" evidence="1">
    <location>
        <begin position="165"/>
        <end position="185"/>
    </location>
</feature>
<feature type="transmembrane region" description="Helical" evidence="1">
    <location>
        <begin position="213"/>
        <end position="233"/>
    </location>
</feature>
<feature type="transmembrane region" description="Helical" evidence="1">
    <location>
        <begin position="247"/>
        <end position="267"/>
    </location>
</feature>
<feature type="transmembrane region" description="Helical" evidence="1">
    <location>
        <begin position="276"/>
        <end position="296"/>
    </location>
</feature>
<feature type="transmembrane region" description="Helical" evidence="1">
    <location>
        <begin position="337"/>
        <end position="357"/>
    </location>
</feature>
<feature type="transmembrane region" description="Helical" evidence="1">
    <location>
        <begin position="363"/>
        <end position="383"/>
    </location>
</feature>
<feature type="transmembrane region" description="Helical" evidence="1">
    <location>
        <begin position="396"/>
        <end position="416"/>
    </location>
</feature>
<feature type="transmembrane region" description="Helical" evidence="1">
    <location>
        <begin position="419"/>
        <end position="439"/>
    </location>
</feature>
<dbReference type="EMBL" id="CU928160">
    <property type="protein sequence ID" value="CAR00725.1"/>
    <property type="molecule type" value="Genomic_DNA"/>
</dbReference>
<dbReference type="RefSeq" id="WP_000102319.1">
    <property type="nucleotide sequence ID" value="NC_011741.1"/>
</dbReference>
<dbReference type="GeneID" id="75205465"/>
<dbReference type="KEGG" id="ecr:ECIAI1_3931"/>
<dbReference type="HOGENOM" id="CLU_008142_4_2_6"/>
<dbReference type="GO" id="GO:0005886">
    <property type="term" value="C:plasma membrane"/>
    <property type="evidence" value="ECO:0007669"/>
    <property type="project" value="UniProtKB-SubCell"/>
</dbReference>
<dbReference type="GO" id="GO:0015079">
    <property type="term" value="F:potassium ion transmembrane transporter activity"/>
    <property type="evidence" value="ECO:0007669"/>
    <property type="project" value="UniProtKB-UniRule"/>
</dbReference>
<dbReference type="GO" id="GO:0015293">
    <property type="term" value="F:symporter activity"/>
    <property type="evidence" value="ECO:0007669"/>
    <property type="project" value="UniProtKB-UniRule"/>
</dbReference>
<dbReference type="HAMAP" id="MF_01522">
    <property type="entry name" value="Kup"/>
    <property type="match status" value="1"/>
</dbReference>
<dbReference type="InterPro" id="IPR003855">
    <property type="entry name" value="K+_transporter"/>
</dbReference>
<dbReference type="InterPro" id="IPR053952">
    <property type="entry name" value="K_trans_C"/>
</dbReference>
<dbReference type="InterPro" id="IPR053951">
    <property type="entry name" value="K_trans_N"/>
</dbReference>
<dbReference type="InterPro" id="IPR023051">
    <property type="entry name" value="Kup"/>
</dbReference>
<dbReference type="NCBIfam" id="TIGR00794">
    <property type="entry name" value="kup"/>
    <property type="match status" value="1"/>
</dbReference>
<dbReference type="NCBIfam" id="NF008015">
    <property type="entry name" value="PRK10745.1"/>
    <property type="match status" value="1"/>
</dbReference>
<dbReference type="PANTHER" id="PTHR30540:SF79">
    <property type="entry name" value="LOW AFFINITY POTASSIUM TRANSPORT SYSTEM PROTEIN KUP"/>
    <property type="match status" value="1"/>
</dbReference>
<dbReference type="PANTHER" id="PTHR30540">
    <property type="entry name" value="OSMOTIC STRESS POTASSIUM TRANSPORTER"/>
    <property type="match status" value="1"/>
</dbReference>
<dbReference type="Pfam" id="PF02705">
    <property type="entry name" value="K_trans"/>
    <property type="match status" value="1"/>
</dbReference>
<dbReference type="Pfam" id="PF22776">
    <property type="entry name" value="K_trans_C"/>
    <property type="match status" value="1"/>
</dbReference>
<sequence length="622" mass="69294">MSTDNKQSLPAITLAAIGVVYGDIGTSPLYTLRECLSGQFGFGVERDAVFGFLSLIFWLLIFVVSIKYLTFVMRADNAGEGGILTLMSLAGRNTSARTTSMLVIMGLIGGSFFYGEVVITPAISVMSAIEGLEIVAPQLDTWIVPLSIIVLTLLFMIQKHGTAMVGKLFAPIMLTWFLILAGLGLRSIIANPEVLHALNPMWAVHFFLEYKTVSFIALGAVVLSITGVEALYADMGHFGKFPIRLAWFTVVLPSLTLNYFGQGALLLKNPEAIKNPFFLLAPDWALIPLLIIAALATVIASQAVISGVFSLTRQAVRLGYLSPMRIIHTSEMESGQIYIPFVNWMLYVAVVIVIVSFEHSSNLAAAYGIAVTGTMVLTSILSTTVARQNWHWNKYFVALILIAFLCVDIPLFTANLDKLLSGGWLPLSLGTVMFIVMTTWKSERFRLLRRMHEHGNSLEAMIASLEKSPPVRVPGTAVYMSRAINVIPFALMHNLKHNKVLHERVILLTLRTEDAPYVHNVRRVQIEQLSPTFWRVVASYGWRETPNVEEVFHRCGLEGLSCRMMETSFFMSHESLILGKRPWYLRLRGKLYLLLQRNALRAPDQFEIPPNRVIELGTQVEI</sequence>